<evidence type="ECO:0000255" key="1">
    <source>
        <dbReference type="HAMAP-Rule" id="MF_01351"/>
    </source>
</evidence>
<proteinExistence type="inferred from homology"/>
<name>NUOI2_SYNFM</name>
<protein>
    <recommendedName>
        <fullName evidence="1">NADH-quinone oxidoreductase subunit I 2</fullName>
        <ecNumber evidence="1">7.1.1.-</ecNumber>
    </recommendedName>
    <alternativeName>
        <fullName evidence="1">NADH dehydrogenase I subunit I 2</fullName>
    </alternativeName>
    <alternativeName>
        <fullName evidence="1">NDH-1 subunit I 2</fullName>
    </alternativeName>
</protein>
<feature type="chain" id="PRO_0000298556" description="NADH-quinone oxidoreductase subunit I 2">
    <location>
        <begin position="1"/>
        <end position="178"/>
    </location>
</feature>
<feature type="domain" description="4Fe-4S ferredoxin-type 1" evidence="1">
    <location>
        <begin position="46"/>
        <end position="78"/>
    </location>
</feature>
<feature type="domain" description="4Fe-4S ferredoxin-type 2" evidence="1">
    <location>
        <begin position="88"/>
        <end position="117"/>
    </location>
</feature>
<feature type="binding site" evidence="1">
    <location>
        <position position="58"/>
    </location>
    <ligand>
        <name>[4Fe-4S] cluster</name>
        <dbReference type="ChEBI" id="CHEBI:49883"/>
        <label>1</label>
    </ligand>
</feature>
<feature type="binding site" evidence="1">
    <location>
        <position position="61"/>
    </location>
    <ligand>
        <name>[4Fe-4S] cluster</name>
        <dbReference type="ChEBI" id="CHEBI:49883"/>
        <label>1</label>
    </ligand>
</feature>
<feature type="binding site" evidence="1">
    <location>
        <position position="64"/>
    </location>
    <ligand>
        <name>[4Fe-4S] cluster</name>
        <dbReference type="ChEBI" id="CHEBI:49883"/>
        <label>1</label>
    </ligand>
</feature>
<feature type="binding site" evidence="1">
    <location>
        <position position="68"/>
    </location>
    <ligand>
        <name>[4Fe-4S] cluster</name>
        <dbReference type="ChEBI" id="CHEBI:49883"/>
        <label>2</label>
    </ligand>
</feature>
<feature type="binding site" evidence="1">
    <location>
        <position position="97"/>
    </location>
    <ligand>
        <name>[4Fe-4S] cluster</name>
        <dbReference type="ChEBI" id="CHEBI:49883"/>
        <label>2</label>
    </ligand>
</feature>
<feature type="binding site" evidence="1">
    <location>
        <position position="100"/>
    </location>
    <ligand>
        <name>[4Fe-4S] cluster</name>
        <dbReference type="ChEBI" id="CHEBI:49883"/>
        <label>2</label>
    </ligand>
</feature>
<feature type="binding site" evidence="1">
    <location>
        <position position="103"/>
    </location>
    <ligand>
        <name>[4Fe-4S] cluster</name>
        <dbReference type="ChEBI" id="CHEBI:49883"/>
        <label>2</label>
    </ligand>
</feature>
<feature type="binding site" evidence="1">
    <location>
        <position position="107"/>
    </location>
    <ligand>
        <name>[4Fe-4S] cluster</name>
        <dbReference type="ChEBI" id="CHEBI:49883"/>
        <label>1</label>
    </ligand>
</feature>
<gene>
    <name evidence="1" type="primary">nuoI2</name>
    <name type="ordered locus">Sfum_1940</name>
</gene>
<dbReference type="EC" id="7.1.1.-" evidence="1"/>
<dbReference type="EMBL" id="CP000478">
    <property type="protein sequence ID" value="ABK17625.1"/>
    <property type="molecule type" value="Genomic_DNA"/>
</dbReference>
<dbReference type="RefSeq" id="WP_011698795.1">
    <property type="nucleotide sequence ID" value="NC_008554.1"/>
</dbReference>
<dbReference type="SMR" id="A0LJM3"/>
<dbReference type="FunCoup" id="A0LJM3">
    <property type="interactions" value="403"/>
</dbReference>
<dbReference type="STRING" id="335543.Sfum_1940"/>
<dbReference type="KEGG" id="sfu:Sfum_1940"/>
<dbReference type="eggNOG" id="COG1143">
    <property type="taxonomic scope" value="Bacteria"/>
</dbReference>
<dbReference type="HOGENOM" id="CLU_067218_4_3_7"/>
<dbReference type="InParanoid" id="A0LJM3"/>
<dbReference type="OrthoDB" id="9808559at2"/>
<dbReference type="Proteomes" id="UP000001784">
    <property type="component" value="Chromosome"/>
</dbReference>
<dbReference type="GO" id="GO:0005886">
    <property type="term" value="C:plasma membrane"/>
    <property type="evidence" value="ECO:0007669"/>
    <property type="project" value="UniProtKB-SubCell"/>
</dbReference>
<dbReference type="GO" id="GO:0051539">
    <property type="term" value="F:4 iron, 4 sulfur cluster binding"/>
    <property type="evidence" value="ECO:0007669"/>
    <property type="project" value="UniProtKB-KW"/>
</dbReference>
<dbReference type="GO" id="GO:0005506">
    <property type="term" value="F:iron ion binding"/>
    <property type="evidence" value="ECO:0007669"/>
    <property type="project" value="UniProtKB-UniRule"/>
</dbReference>
<dbReference type="GO" id="GO:0050136">
    <property type="term" value="F:NADH:ubiquinone reductase (non-electrogenic) activity"/>
    <property type="evidence" value="ECO:0007669"/>
    <property type="project" value="UniProtKB-UniRule"/>
</dbReference>
<dbReference type="GO" id="GO:0048038">
    <property type="term" value="F:quinone binding"/>
    <property type="evidence" value="ECO:0007669"/>
    <property type="project" value="UniProtKB-KW"/>
</dbReference>
<dbReference type="GO" id="GO:0009060">
    <property type="term" value="P:aerobic respiration"/>
    <property type="evidence" value="ECO:0007669"/>
    <property type="project" value="TreeGrafter"/>
</dbReference>
<dbReference type="Gene3D" id="3.30.70.3270">
    <property type="match status" value="1"/>
</dbReference>
<dbReference type="HAMAP" id="MF_01351">
    <property type="entry name" value="NDH1_NuoI"/>
    <property type="match status" value="1"/>
</dbReference>
<dbReference type="InterPro" id="IPR017896">
    <property type="entry name" value="4Fe4S_Fe-S-bd"/>
</dbReference>
<dbReference type="InterPro" id="IPR017900">
    <property type="entry name" value="4Fe4S_Fe_S_CS"/>
</dbReference>
<dbReference type="InterPro" id="IPR010226">
    <property type="entry name" value="NADH_quinone_OxRdtase_chainI"/>
</dbReference>
<dbReference type="NCBIfam" id="TIGR01971">
    <property type="entry name" value="NuoI"/>
    <property type="match status" value="1"/>
</dbReference>
<dbReference type="NCBIfam" id="NF004536">
    <property type="entry name" value="PRK05888.1-1"/>
    <property type="match status" value="1"/>
</dbReference>
<dbReference type="PANTHER" id="PTHR10849:SF20">
    <property type="entry name" value="NADH DEHYDROGENASE [UBIQUINONE] IRON-SULFUR PROTEIN 8, MITOCHONDRIAL"/>
    <property type="match status" value="1"/>
</dbReference>
<dbReference type="PANTHER" id="PTHR10849">
    <property type="entry name" value="NADH DEHYDROGENASE UBIQUINONE IRON-SULFUR PROTEIN 8, MITOCHONDRIAL"/>
    <property type="match status" value="1"/>
</dbReference>
<dbReference type="Pfam" id="PF12838">
    <property type="entry name" value="Fer4_7"/>
    <property type="match status" value="1"/>
</dbReference>
<dbReference type="SUPFAM" id="SSF54862">
    <property type="entry name" value="4Fe-4S ferredoxins"/>
    <property type="match status" value="1"/>
</dbReference>
<dbReference type="PROSITE" id="PS00198">
    <property type="entry name" value="4FE4S_FER_1"/>
    <property type="match status" value="2"/>
</dbReference>
<dbReference type="PROSITE" id="PS51379">
    <property type="entry name" value="4FE4S_FER_2"/>
    <property type="match status" value="2"/>
</dbReference>
<keyword id="KW-0004">4Fe-4S</keyword>
<keyword id="KW-0997">Cell inner membrane</keyword>
<keyword id="KW-1003">Cell membrane</keyword>
<keyword id="KW-0408">Iron</keyword>
<keyword id="KW-0411">Iron-sulfur</keyword>
<keyword id="KW-0472">Membrane</keyword>
<keyword id="KW-0479">Metal-binding</keyword>
<keyword id="KW-0520">NAD</keyword>
<keyword id="KW-0874">Quinone</keyword>
<keyword id="KW-1185">Reference proteome</keyword>
<keyword id="KW-0677">Repeat</keyword>
<keyword id="KW-1278">Translocase</keyword>
<keyword id="KW-0830">Ubiquinone</keyword>
<accession>A0LJM3</accession>
<organism>
    <name type="scientific">Syntrophobacter fumaroxidans (strain DSM 10017 / MPOB)</name>
    <dbReference type="NCBI Taxonomy" id="335543"/>
    <lineage>
        <taxon>Bacteria</taxon>
        <taxon>Pseudomonadati</taxon>
        <taxon>Thermodesulfobacteriota</taxon>
        <taxon>Syntrophobacteria</taxon>
        <taxon>Syntrophobacterales</taxon>
        <taxon>Syntrophobacteraceae</taxon>
        <taxon>Syntrophobacter</taxon>
    </lineage>
</organism>
<reference key="1">
    <citation type="submission" date="2006-10" db="EMBL/GenBank/DDBJ databases">
        <title>Complete sequence of Syntrophobacter fumaroxidans MPOB.</title>
        <authorList>
            <consortium name="US DOE Joint Genome Institute"/>
            <person name="Copeland A."/>
            <person name="Lucas S."/>
            <person name="Lapidus A."/>
            <person name="Barry K."/>
            <person name="Detter J.C."/>
            <person name="Glavina del Rio T."/>
            <person name="Hammon N."/>
            <person name="Israni S."/>
            <person name="Pitluck S."/>
            <person name="Goltsman E.G."/>
            <person name="Martinez M."/>
            <person name="Schmutz J."/>
            <person name="Larimer F."/>
            <person name="Land M."/>
            <person name="Hauser L."/>
            <person name="Kyrpides N."/>
            <person name="Kim E."/>
            <person name="Boone D.R."/>
            <person name="Brockman F."/>
            <person name="Culley D."/>
            <person name="Ferry J."/>
            <person name="Gunsalus R."/>
            <person name="McInerney M.J."/>
            <person name="Morrison M."/>
            <person name="Plugge C."/>
            <person name="Rohlin L."/>
            <person name="Scholten J."/>
            <person name="Sieber J."/>
            <person name="Stams A.J.M."/>
            <person name="Worm P."/>
            <person name="Henstra A.M."/>
            <person name="Richardson P."/>
        </authorList>
    </citation>
    <scope>NUCLEOTIDE SEQUENCE [LARGE SCALE GENOMIC DNA]</scope>
    <source>
        <strain>DSM 10017 / MPOB</strain>
    </source>
</reference>
<sequence length="178" mass="20034">MSSAWEAVRALASGFATTFVHLFRKPVTEEYPEVKRALPARTRAVIVLTRDPDGGERCVACYLCSAVCPVSCISMQAAEREDGRRHAAWFRINFARCIYCGLCEEACPTSAIQLTPFFETCERDILKLVYEKEDLLVDHQGKDKEYNFYKYAGVTTDVGGKGEHVQEDEPVDLRSNLP</sequence>
<comment type="function">
    <text evidence="1">NDH-1 shuttles electrons from NADH, via FMN and iron-sulfur (Fe-S) centers, to quinones in the respiratory chain. The immediate electron acceptor for the enzyme in this species is believed to be ubiquinone. Couples the redox reaction to proton translocation (for every two electrons transferred, four hydrogen ions are translocated across the cytoplasmic membrane), and thus conserves the redox energy in a proton gradient.</text>
</comment>
<comment type="catalytic activity">
    <reaction evidence="1">
        <text>a quinone + NADH + 5 H(+)(in) = a quinol + NAD(+) + 4 H(+)(out)</text>
        <dbReference type="Rhea" id="RHEA:57888"/>
        <dbReference type="ChEBI" id="CHEBI:15378"/>
        <dbReference type="ChEBI" id="CHEBI:24646"/>
        <dbReference type="ChEBI" id="CHEBI:57540"/>
        <dbReference type="ChEBI" id="CHEBI:57945"/>
        <dbReference type="ChEBI" id="CHEBI:132124"/>
    </reaction>
</comment>
<comment type="cofactor">
    <cofactor evidence="1">
        <name>[4Fe-4S] cluster</name>
        <dbReference type="ChEBI" id="CHEBI:49883"/>
    </cofactor>
    <text evidence="1">Binds 2 [4Fe-4S] clusters per subunit.</text>
</comment>
<comment type="subunit">
    <text evidence="1">NDH-1 is composed of 14 different subunits. Subunits NuoA, H, J, K, L, M, N constitute the membrane sector of the complex.</text>
</comment>
<comment type="subcellular location">
    <subcellularLocation>
        <location evidence="1">Cell inner membrane</location>
        <topology evidence="1">Peripheral membrane protein</topology>
    </subcellularLocation>
</comment>
<comment type="similarity">
    <text evidence="1">Belongs to the complex I 23 kDa subunit family.</text>
</comment>